<comment type="function">
    <text evidence="1">Catalyzes the rearrangement of 1-deoxy-D-xylulose 5-phosphate (DXP) to produce the thiazole phosphate moiety of thiamine. Sulfur is provided by the thiocarboxylate moiety of the carrier protein ThiS. In vitro, sulfur can be provided by H(2)S.</text>
</comment>
<comment type="catalytic activity">
    <reaction evidence="1">
        <text>[ThiS sulfur-carrier protein]-C-terminal-Gly-aminoethanethioate + 2-iminoacetate + 1-deoxy-D-xylulose 5-phosphate = [ThiS sulfur-carrier protein]-C-terminal Gly-Gly + 2-[(2R,5Z)-2-carboxy-4-methylthiazol-5(2H)-ylidene]ethyl phosphate + 2 H2O + H(+)</text>
        <dbReference type="Rhea" id="RHEA:26297"/>
        <dbReference type="Rhea" id="RHEA-COMP:12909"/>
        <dbReference type="Rhea" id="RHEA-COMP:19908"/>
        <dbReference type="ChEBI" id="CHEBI:15377"/>
        <dbReference type="ChEBI" id="CHEBI:15378"/>
        <dbReference type="ChEBI" id="CHEBI:57792"/>
        <dbReference type="ChEBI" id="CHEBI:62899"/>
        <dbReference type="ChEBI" id="CHEBI:77846"/>
        <dbReference type="ChEBI" id="CHEBI:90778"/>
        <dbReference type="ChEBI" id="CHEBI:232372"/>
        <dbReference type="EC" id="2.8.1.10"/>
    </reaction>
</comment>
<comment type="pathway">
    <text evidence="1">Cofactor biosynthesis; thiamine diphosphate biosynthesis.</text>
</comment>
<comment type="subunit">
    <text evidence="1">Homotetramer. Forms heterodimers with either ThiH or ThiS.</text>
</comment>
<comment type="subcellular location">
    <subcellularLocation>
        <location evidence="1">Cytoplasm</location>
    </subcellularLocation>
</comment>
<comment type="similarity">
    <text evidence="1">Belongs to the ThiG family.</text>
</comment>
<evidence type="ECO:0000255" key="1">
    <source>
        <dbReference type="HAMAP-Rule" id="MF_00443"/>
    </source>
</evidence>
<organism>
    <name type="scientific">Mycobacterium bovis (strain BCG / Tokyo 172 / ATCC 35737 / TMC 1019)</name>
    <dbReference type="NCBI Taxonomy" id="561275"/>
    <lineage>
        <taxon>Bacteria</taxon>
        <taxon>Bacillati</taxon>
        <taxon>Actinomycetota</taxon>
        <taxon>Actinomycetes</taxon>
        <taxon>Mycobacteriales</taxon>
        <taxon>Mycobacteriaceae</taxon>
        <taxon>Mycobacterium</taxon>
        <taxon>Mycobacterium tuberculosis complex</taxon>
    </lineage>
</organism>
<accession>C1AK93</accession>
<sequence>MAESKLVIGDRSFASRLIMGTGGATNLAVLEQALIASGTELTTVAIRRVDADGGTGLLDLLNRLGITPLPNTAGCRSAAEAVLTAQLAREALNTNWVKLEVIADERTLWPDAVELVRAAEQLVDDGFVVLPYTTDDPVLARRLEDTGCAAVMPLGSPIGTGLGIANPHNIEMIVAGARVPVVLDAGIGTASDAALAMELGCDAVLLASAVTRAADPPAMAAAMAAAVTAGYLARCAGRIPKRFWAQASSPAR</sequence>
<dbReference type="EC" id="2.8.1.10" evidence="1"/>
<dbReference type="EMBL" id="AP010918">
    <property type="protein sequence ID" value="BAH24722.1"/>
    <property type="molecule type" value="Genomic_DNA"/>
</dbReference>
<dbReference type="RefSeq" id="WP_003402126.1">
    <property type="nucleotide sequence ID" value="NZ_CP014566.1"/>
</dbReference>
<dbReference type="SMR" id="C1AK93"/>
<dbReference type="GeneID" id="45424378"/>
<dbReference type="KEGG" id="mbt:JTY_0426"/>
<dbReference type="HOGENOM" id="CLU_062233_1_0_11"/>
<dbReference type="UniPathway" id="UPA00060"/>
<dbReference type="GO" id="GO:0005737">
    <property type="term" value="C:cytoplasm"/>
    <property type="evidence" value="ECO:0007669"/>
    <property type="project" value="UniProtKB-SubCell"/>
</dbReference>
<dbReference type="GO" id="GO:1990107">
    <property type="term" value="F:thiazole synthase activity"/>
    <property type="evidence" value="ECO:0007669"/>
    <property type="project" value="UniProtKB-EC"/>
</dbReference>
<dbReference type="GO" id="GO:0009229">
    <property type="term" value="P:thiamine diphosphate biosynthetic process"/>
    <property type="evidence" value="ECO:0007669"/>
    <property type="project" value="UniProtKB-UniRule"/>
</dbReference>
<dbReference type="CDD" id="cd04728">
    <property type="entry name" value="ThiG"/>
    <property type="match status" value="1"/>
</dbReference>
<dbReference type="Gene3D" id="3.20.20.70">
    <property type="entry name" value="Aldolase class I"/>
    <property type="match status" value="1"/>
</dbReference>
<dbReference type="HAMAP" id="MF_00443">
    <property type="entry name" value="ThiG"/>
    <property type="match status" value="1"/>
</dbReference>
<dbReference type="InterPro" id="IPR013785">
    <property type="entry name" value="Aldolase_TIM"/>
</dbReference>
<dbReference type="InterPro" id="IPR033983">
    <property type="entry name" value="Thiazole_synthase_ThiG"/>
</dbReference>
<dbReference type="InterPro" id="IPR008867">
    <property type="entry name" value="ThiG"/>
</dbReference>
<dbReference type="PANTHER" id="PTHR34266">
    <property type="entry name" value="THIAZOLE SYNTHASE"/>
    <property type="match status" value="1"/>
</dbReference>
<dbReference type="PANTHER" id="PTHR34266:SF2">
    <property type="entry name" value="THIAZOLE SYNTHASE"/>
    <property type="match status" value="1"/>
</dbReference>
<dbReference type="Pfam" id="PF05690">
    <property type="entry name" value="ThiG"/>
    <property type="match status" value="1"/>
</dbReference>
<dbReference type="SUPFAM" id="SSF110399">
    <property type="entry name" value="ThiG-like"/>
    <property type="match status" value="1"/>
</dbReference>
<feature type="chain" id="PRO_1000196875" description="Thiazole synthase">
    <location>
        <begin position="1"/>
        <end position="252"/>
    </location>
</feature>
<feature type="active site" description="Schiff-base intermediate with DXP" evidence="1">
    <location>
        <position position="98"/>
    </location>
</feature>
<feature type="binding site" evidence="1">
    <location>
        <position position="159"/>
    </location>
    <ligand>
        <name>1-deoxy-D-xylulose 5-phosphate</name>
        <dbReference type="ChEBI" id="CHEBI:57792"/>
    </ligand>
</feature>
<feature type="binding site" evidence="1">
    <location>
        <begin position="185"/>
        <end position="186"/>
    </location>
    <ligand>
        <name>1-deoxy-D-xylulose 5-phosphate</name>
        <dbReference type="ChEBI" id="CHEBI:57792"/>
    </ligand>
</feature>
<feature type="binding site" evidence="1">
    <location>
        <begin position="207"/>
        <end position="208"/>
    </location>
    <ligand>
        <name>1-deoxy-D-xylulose 5-phosphate</name>
        <dbReference type="ChEBI" id="CHEBI:57792"/>
    </ligand>
</feature>
<keyword id="KW-0963">Cytoplasm</keyword>
<keyword id="KW-0704">Schiff base</keyword>
<keyword id="KW-0784">Thiamine biosynthesis</keyword>
<keyword id="KW-0808">Transferase</keyword>
<gene>
    <name evidence="1" type="primary">thiG</name>
    <name type="ordered locus">JTY_0426</name>
</gene>
<reference key="1">
    <citation type="journal article" date="2009" name="Vaccine">
        <title>Whole genome sequence analysis of Mycobacterium bovis bacillus Calmette-Guerin (BCG) Tokyo 172: a comparative study of BCG vaccine substrains.</title>
        <authorList>
            <person name="Seki M."/>
            <person name="Honda I."/>
            <person name="Fujita I."/>
            <person name="Yano I."/>
            <person name="Yamamoto S."/>
            <person name="Koyama A."/>
        </authorList>
    </citation>
    <scope>NUCLEOTIDE SEQUENCE [LARGE SCALE GENOMIC DNA]</scope>
    <source>
        <strain>BCG / Tokyo 172 / ATCC 35737 / TMC 1019</strain>
    </source>
</reference>
<name>THIG_MYCBT</name>
<protein>
    <recommendedName>
        <fullName evidence="1">Thiazole synthase</fullName>
        <ecNumber evidence="1">2.8.1.10</ecNumber>
    </recommendedName>
</protein>
<proteinExistence type="inferred from homology"/>